<sequence>MQLNSTEISELIKKRIAQFDVVSEARNTGTIVSVSDGIIRIHGLSDVMQGEMIALPGNRYAMALNLERDSVGAVVMGPYADLAEGMEVQCTGRILEVPVGSGLLGRVVNTLGQPIDGKGEIENDDFSPVEVIAPGVIDRRSVDQPVQTGYKAVDSMVPIGRGQRELIIGDRQTGKTALAIDAIINQRNSGIKCIYVAIGQKASTIANVVRKLEEHGALANTIVVAASASESAALQYLAPYAGCAMGEYFRDRGEDALIVYDDLSKQAVAYRQISLLLRRPPGREAYPGDVFYLHSRLLERASRVNEDYVEKFTKGEVKGKTGSLTALPIIETQAGDVSAFVPTNVISITDGQIFLESNLFNSGIRPAVNPGISVSRVGGSAQTKVIKKLAGGIRTALAQYRELAAFAQFASDLDDATRKQLSHGEKVTELLKQKQFAPLSVAEQAVILFAVEFGYLDDVELSKIASFETALLDYSNRNHAEFMQELNKTGNYNDEIKDTLKSILDGFKANSAW</sequence>
<proteinExistence type="inferred from homology"/>
<dbReference type="EC" id="7.1.2.2" evidence="1"/>
<dbReference type="EMBL" id="CP000057">
    <property type="protein sequence ID" value="AAX87535.1"/>
    <property type="molecule type" value="Genomic_DNA"/>
</dbReference>
<dbReference type="RefSeq" id="WP_011272081.1">
    <property type="nucleotide sequence ID" value="NC_007146.2"/>
</dbReference>
<dbReference type="SMR" id="Q4QN62"/>
<dbReference type="KEGG" id="hit:NTHI0611"/>
<dbReference type="HOGENOM" id="CLU_010091_2_1_6"/>
<dbReference type="Proteomes" id="UP000002525">
    <property type="component" value="Chromosome"/>
</dbReference>
<dbReference type="GO" id="GO:0005886">
    <property type="term" value="C:plasma membrane"/>
    <property type="evidence" value="ECO:0007669"/>
    <property type="project" value="UniProtKB-SubCell"/>
</dbReference>
<dbReference type="GO" id="GO:0045259">
    <property type="term" value="C:proton-transporting ATP synthase complex"/>
    <property type="evidence" value="ECO:0007669"/>
    <property type="project" value="UniProtKB-KW"/>
</dbReference>
<dbReference type="GO" id="GO:0043531">
    <property type="term" value="F:ADP binding"/>
    <property type="evidence" value="ECO:0007669"/>
    <property type="project" value="TreeGrafter"/>
</dbReference>
<dbReference type="GO" id="GO:0005524">
    <property type="term" value="F:ATP binding"/>
    <property type="evidence" value="ECO:0007669"/>
    <property type="project" value="UniProtKB-UniRule"/>
</dbReference>
<dbReference type="GO" id="GO:0046933">
    <property type="term" value="F:proton-transporting ATP synthase activity, rotational mechanism"/>
    <property type="evidence" value="ECO:0007669"/>
    <property type="project" value="UniProtKB-UniRule"/>
</dbReference>
<dbReference type="CDD" id="cd18113">
    <property type="entry name" value="ATP-synt_F1_alpha_C"/>
    <property type="match status" value="1"/>
</dbReference>
<dbReference type="CDD" id="cd18116">
    <property type="entry name" value="ATP-synt_F1_alpha_N"/>
    <property type="match status" value="1"/>
</dbReference>
<dbReference type="CDD" id="cd01132">
    <property type="entry name" value="F1-ATPase_alpha_CD"/>
    <property type="match status" value="1"/>
</dbReference>
<dbReference type="FunFam" id="1.20.150.20:FF:000001">
    <property type="entry name" value="ATP synthase subunit alpha"/>
    <property type="match status" value="1"/>
</dbReference>
<dbReference type="FunFam" id="2.40.30.20:FF:000001">
    <property type="entry name" value="ATP synthase subunit alpha"/>
    <property type="match status" value="1"/>
</dbReference>
<dbReference type="FunFam" id="3.40.50.300:FF:000002">
    <property type="entry name" value="ATP synthase subunit alpha"/>
    <property type="match status" value="1"/>
</dbReference>
<dbReference type="Gene3D" id="2.40.30.20">
    <property type="match status" value="1"/>
</dbReference>
<dbReference type="Gene3D" id="1.20.150.20">
    <property type="entry name" value="ATP synthase alpha/beta chain, C-terminal domain"/>
    <property type="match status" value="1"/>
</dbReference>
<dbReference type="Gene3D" id="3.40.50.300">
    <property type="entry name" value="P-loop containing nucleotide triphosphate hydrolases"/>
    <property type="match status" value="1"/>
</dbReference>
<dbReference type="HAMAP" id="MF_01346">
    <property type="entry name" value="ATP_synth_alpha_bact"/>
    <property type="match status" value="1"/>
</dbReference>
<dbReference type="InterPro" id="IPR023366">
    <property type="entry name" value="ATP_synth_asu-like_sf"/>
</dbReference>
<dbReference type="InterPro" id="IPR000793">
    <property type="entry name" value="ATP_synth_asu_C"/>
</dbReference>
<dbReference type="InterPro" id="IPR038376">
    <property type="entry name" value="ATP_synth_asu_C_sf"/>
</dbReference>
<dbReference type="InterPro" id="IPR033732">
    <property type="entry name" value="ATP_synth_F1_a_nt-bd_dom"/>
</dbReference>
<dbReference type="InterPro" id="IPR005294">
    <property type="entry name" value="ATP_synth_F1_asu"/>
</dbReference>
<dbReference type="InterPro" id="IPR020003">
    <property type="entry name" value="ATPase_a/bsu_AS"/>
</dbReference>
<dbReference type="InterPro" id="IPR004100">
    <property type="entry name" value="ATPase_F1/V1/A1_a/bsu_N"/>
</dbReference>
<dbReference type="InterPro" id="IPR036121">
    <property type="entry name" value="ATPase_F1/V1/A1_a/bsu_N_sf"/>
</dbReference>
<dbReference type="InterPro" id="IPR000194">
    <property type="entry name" value="ATPase_F1/V1/A1_a/bsu_nucl-bd"/>
</dbReference>
<dbReference type="InterPro" id="IPR027417">
    <property type="entry name" value="P-loop_NTPase"/>
</dbReference>
<dbReference type="NCBIfam" id="TIGR00962">
    <property type="entry name" value="atpA"/>
    <property type="match status" value="1"/>
</dbReference>
<dbReference type="NCBIfam" id="NF009884">
    <property type="entry name" value="PRK13343.1"/>
    <property type="match status" value="1"/>
</dbReference>
<dbReference type="PANTHER" id="PTHR48082">
    <property type="entry name" value="ATP SYNTHASE SUBUNIT ALPHA, MITOCHONDRIAL"/>
    <property type="match status" value="1"/>
</dbReference>
<dbReference type="PANTHER" id="PTHR48082:SF2">
    <property type="entry name" value="ATP SYNTHASE SUBUNIT ALPHA, MITOCHONDRIAL"/>
    <property type="match status" value="1"/>
</dbReference>
<dbReference type="Pfam" id="PF00006">
    <property type="entry name" value="ATP-synt_ab"/>
    <property type="match status" value="1"/>
</dbReference>
<dbReference type="Pfam" id="PF00306">
    <property type="entry name" value="ATP-synt_ab_C"/>
    <property type="match status" value="1"/>
</dbReference>
<dbReference type="Pfam" id="PF02874">
    <property type="entry name" value="ATP-synt_ab_N"/>
    <property type="match status" value="1"/>
</dbReference>
<dbReference type="PIRSF" id="PIRSF039088">
    <property type="entry name" value="F_ATPase_subunit_alpha"/>
    <property type="match status" value="1"/>
</dbReference>
<dbReference type="SUPFAM" id="SSF47917">
    <property type="entry name" value="C-terminal domain of alpha and beta subunits of F1 ATP synthase"/>
    <property type="match status" value="1"/>
</dbReference>
<dbReference type="SUPFAM" id="SSF50615">
    <property type="entry name" value="N-terminal domain of alpha and beta subunits of F1 ATP synthase"/>
    <property type="match status" value="1"/>
</dbReference>
<dbReference type="SUPFAM" id="SSF52540">
    <property type="entry name" value="P-loop containing nucleoside triphosphate hydrolases"/>
    <property type="match status" value="1"/>
</dbReference>
<dbReference type="PROSITE" id="PS00152">
    <property type="entry name" value="ATPASE_ALPHA_BETA"/>
    <property type="match status" value="1"/>
</dbReference>
<comment type="function">
    <text evidence="1">Produces ATP from ADP in the presence of a proton gradient across the membrane. The alpha chain is a regulatory subunit.</text>
</comment>
<comment type="catalytic activity">
    <reaction evidence="1">
        <text>ATP + H2O + 4 H(+)(in) = ADP + phosphate + 5 H(+)(out)</text>
        <dbReference type="Rhea" id="RHEA:57720"/>
        <dbReference type="ChEBI" id="CHEBI:15377"/>
        <dbReference type="ChEBI" id="CHEBI:15378"/>
        <dbReference type="ChEBI" id="CHEBI:30616"/>
        <dbReference type="ChEBI" id="CHEBI:43474"/>
        <dbReference type="ChEBI" id="CHEBI:456216"/>
        <dbReference type="EC" id="7.1.2.2"/>
    </reaction>
</comment>
<comment type="subunit">
    <text evidence="1">F-type ATPases have 2 components, CF(1) - the catalytic core - and CF(0) - the membrane proton channel. CF(1) has five subunits: alpha(3), beta(3), gamma(1), delta(1), epsilon(1). CF(0) has three main subunits: a(1), b(2) and c(9-12). The alpha and beta chains form an alternating ring which encloses part of the gamma chain. CF(1) is attached to CF(0) by a central stalk formed by the gamma and epsilon chains, while a peripheral stalk is formed by the delta and b chains.</text>
</comment>
<comment type="subcellular location">
    <subcellularLocation>
        <location evidence="1">Cell inner membrane</location>
        <topology evidence="1">Peripheral membrane protein</topology>
    </subcellularLocation>
</comment>
<comment type="similarity">
    <text evidence="1">Belongs to the ATPase alpha/beta chains family.</text>
</comment>
<name>ATPA_HAEI8</name>
<accession>Q4QN62</accession>
<gene>
    <name evidence="1" type="primary">atpA</name>
    <name type="ordered locus">NTHI0611</name>
</gene>
<evidence type="ECO:0000255" key="1">
    <source>
        <dbReference type="HAMAP-Rule" id="MF_01346"/>
    </source>
</evidence>
<keyword id="KW-0066">ATP synthesis</keyword>
<keyword id="KW-0067">ATP-binding</keyword>
<keyword id="KW-0997">Cell inner membrane</keyword>
<keyword id="KW-1003">Cell membrane</keyword>
<keyword id="KW-0139">CF(1)</keyword>
<keyword id="KW-0375">Hydrogen ion transport</keyword>
<keyword id="KW-0406">Ion transport</keyword>
<keyword id="KW-0472">Membrane</keyword>
<keyword id="KW-0547">Nucleotide-binding</keyword>
<keyword id="KW-1278">Translocase</keyword>
<keyword id="KW-0813">Transport</keyword>
<protein>
    <recommendedName>
        <fullName evidence="1">ATP synthase subunit alpha</fullName>
        <ecNumber evidence="1">7.1.2.2</ecNumber>
    </recommendedName>
    <alternativeName>
        <fullName evidence="1">ATP synthase F1 sector subunit alpha</fullName>
    </alternativeName>
    <alternativeName>
        <fullName evidence="1">F-ATPase subunit alpha</fullName>
    </alternativeName>
</protein>
<organism>
    <name type="scientific">Haemophilus influenzae (strain 86-028NP)</name>
    <dbReference type="NCBI Taxonomy" id="281310"/>
    <lineage>
        <taxon>Bacteria</taxon>
        <taxon>Pseudomonadati</taxon>
        <taxon>Pseudomonadota</taxon>
        <taxon>Gammaproteobacteria</taxon>
        <taxon>Pasteurellales</taxon>
        <taxon>Pasteurellaceae</taxon>
        <taxon>Haemophilus</taxon>
    </lineage>
</organism>
<reference key="1">
    <citation type="journal article" date="2005" name="J. Bacteriol.">
        <title>Genomic sequence of an otitis media isolate of nontypeable Haemophilus influenzae: comparative study with H. influenzae serotype d, strain KW20.</title>
        <authorList>
            <person name="Harrison A."/>
            <person name="Dyer D.W."/>
            <person name="Gillaspy A."/>
            <person name="Ray W.C."/>
            <person name="Mungur R."/>
            <person name="Carson M.B."/>
            <person name="Zhong H."/>
            <person name="Gipson J."/>
            <person name="Gipson M."/>
            <person name="Johnson L.S."/>
            <person name="Lewis L."/>
            <person name="Bakaletz L.O."/>
            <person name="Munson R.S. Jr."/>
        </authorList>
    </citation>
    <scope>NUCLEOTIDE SEQUENCE [LARGE SCALE GENOMIC DNA]</scope>
    <source>
        <strain>86-028NP</strain>
    </source>
</reference>
<feature type="chain" id="PRO_0000238260" description="ATP synthase subunit alpha">
    <location>
        <begin position="1"/>
        <end position="513"/>
    </location>
</feature>
<feature type="binding site" evidence="1">
    <location>
        <begin position="169"/>
        <end position="176"/>
    </location>
    <ligand>
        <name>ATP</name>
        <dbReference type="ChEBI" id="CHEBI:30616"/>
    </ligand>
</feature>
<feature type="site" description="Required for activity" evidence="1">
    <location>
        <position position="373"/>
    </location>
</feature>